<dbReference type="EC" id="2.7.7.6" evidence="1"/>
<dbReference type="EMBL" id="CP000849">
    <property type="protein sequence ID" value="ABV78814.1"/>
    <property type="molecule type" value="Genomic_DNA"/>
</dbReference>
<dbReference type="RefSeq" id="WP_012151674.1">
    <property type="nucleotide sequence ID" value="NC_009883.1"/>
</dbReference>
<dbReference type="SMR" id="A8GVD7"/>
<dbReference type="KEGG" id="rbo:A1I_02160"/>
<dbReference type="HOGENOM" id="CLU_053084_0_0_5"/>
<dbReference type="GO" id="GO:0005737">
    <property type="term" value="C:cytoplasm"/>
    <property type="evidence" value="ECO:0007669"/>
    <property type="project" value="UniProtKB-ARBA"/>
</dbReference>
<dbReference type="GO" id="GO:0000428">
    <property type="term" value="C:DNA-directed RNA polymerase complex"/>
    <property type="evidence" value="ECO:0007669"/>
    <property type="project" value="UniProtKB-KW"/>
</dbReference>
<dbReference type="GO" id="GO:0003677">
    <property type="term" value="F:DNA binding"/>
    <property type="evidence" value="ECO:0007669"/>
    <property type="project" value="UniProtKB-UniRule"/>
</dbReference>
<dbReference type="GO" id="GO:0003899">
    <property type="term" value="F:DNA-directed RNA polymerase activity"/>
    <property type="evidence" value="ECO:0007669"/>
    <property type="project" value="UniProtKB-UniRule"/>
</dbReference>
<dbReference type="GO" id="GO:0046983">
    <property type="term" value="F:protein dimerization activity"/>
    <property type="evidence" value="ECO:0007669"/>
    <property type="project" value="InterPro"/>
</dbReference>
<dbReference type="GO" id="GO:0006351">
    <property type="term" value="P:DNA-templated transcription"/>
    <property type="evidence" value="ECO:0007669"/>
    <property type="project" value="UniProtKB-UniRule"/>
</dbReference>
<dbReference type="CDD" id="cd06928">
    <property type="entry name" value="RNAP_alpha_NTD"/>
    <property type="match status" value="1"/>
</dbReference>
<dbReference type="FunFam" id="1.10.150.20:FF:000001">
    <property type="entry name" value="DNA-directed RNA polymerase subunit alpha"/>
    <property type="match status" value="1"/>
</dbReference>
<dbReference type="FunFam" id="2.170.120.12:FF:000001">
    <property type="entry name" value="DNA-directed RNA polymerase subunit alpha"/>
    <property type="match status" value="1"/>
</dbReference>
<dbReference type="Gene3D" id="1.10.150.20">
    <property type="entry name" value="5' to 3' exonuclease, C-terminal subdomain"/>
    <property type="match status" value="1"/>
</dbReference>
<dbReference type="Gene3D" id="2.170.120.12">
    <property type="entry name" value="DNA-directed RNA polymerase, insert domain"/>
    <property type="match status" value="1"/>
</dbReference>
<dbReference type="Gene3D" id="3.30.1360.10">
    <property type="entry name" value="RNA polymerase, RBP11-like subunit"/>
    <property type="match status" value="1"/>
</dbReference>
<dbReference type="HAMAP" id="MF_00059">
    <property type="entry name" value="RNApol_bact_RpoA"/>
    <property type="match status" value="1"/>
</dbReference>
<dbReference type="InterPro" id="IPR011262">
    <property type="entry name" value="DNA-dir_RNA_pol_insert"/>
</dbReference>
<dbReference type="InterPro" id="IPR011263">
    <property type="entry name" value="DNA-dir_RNA_pol_RpoA/D/Rpb3"/>
</dbReference>
<dbReference type="InterPro" id="IPR011773">
    <property type="entry name" value="DNA-dir_RpoA"/>
</dbReference>
<dbReference type="InterPro" id="IPR036603">
    <property type="entry name" value="RBP11-like"/>
</dbReference>
<dbReference type="InterPro" id="IPR011260">
    <property type="entry name" value="RNAP_asu_C"/>
</dbReference>
<dbReference type="InterPro" id="IPR036643">
    <property type="entry name" value="RNApol_insert_sf"/>
</dbReference>
<dbReference type="NCBIfam" id="NF003513">
    <property type="entry name" value="PRK05182.1-2"/>
    <property type="match status" value="1"/>
</dbReference>
<dbReference type="NCBIfam" id="NF003519">
    <property type="entry name" value="PRK05182.2-5"/>
    <property type="match status" value="1"/>
</dbReference>
<dbReference type="NCBIfam" id="TIGR02027">
    <property type="entry name" value="rpoA"/>
    <property type="match status" value="1"/>
</dbReference>
<dbReference type="Pfam" id="PF01000">
    <property type="entry name" value="RNA_pol_A_bac"/>
    <property type="match status" value="1"/>
</dbReference>
<dbReference type="Pfam" id="PF03118">
    <property type="entry name" value="RNA_pol_A_CTD"/>
    <property type="match status" value="1"/>
</dbReference>
<dbReference type="Pfam" id="PF01193">
    <property type="entry name" value="RNA_pol_L"/>
    <property type="match status" value="1"/>
</dbReference>
<dbReference type="SMART" id="SM00662">
    <property type="entry name" value="RPOLD"/>
    <property type="match status" value="1"/>
</dbReference>
<dbReference type="SUPFAM" id="SSF47789">
    <property type="entry name" value="C-terminal domain of RNA polymerase alpha subunit"/>
    <property type="match status" value="1"/>
</dbReference>
<dbReference type="SUPFAM" id="SSF56553">
    <property type="entry name" value="Insert subdomain of RNA polymerase alpha subunit"/>
    <property type="match status" value="1"/>
</dbReference>
<dbReference type="SUPFAM" id="SSF55257">
    <property type="entry name" value="RBP11-like subunits of RNA polymerase"/>
    <property type="match status" value="1"/>
</dbReference>
<proteinExistence type="inferred from homology"/>
<keyword id="KW-0240">DNA-directed RNA polymerase</keyword>
<keyword id="KW-0548">Nucleotidyltransferase</keyword>
<keyword id="KW-0804">Transcription</keyword>
<keyword id="KW-0808">Transferase</keyword>
<organism>
    <name type="scientific">Rickettsia bellii (strain OSU 85-389)</name>
    <dbReference type="NCBI Taxonomy" id="391896"/>
    <lineage>
        <taxon>Bacteria</taxon>
        <taxon>Pseudomonadati</taxon>
        <taxon>Pseudomonadota</taxon>
        <taxon>Alphaproteobacteria</taxon>
        <taxon>Rickettsiales</taxon>
        <taxon>Rickettsiaceae</taxon>
        <taxon>Rickettsieae</taxon>
        <taxon>Rickettsia</taxon>
        <taxon>belli group</taxon>
    </lineage>
</organism>
<name>RPOA_RICB8</name>
<accession>A8GVD7</accession>
<reference key="1">
    <citation type="submission" date="2007-09" db="EMBL/GenBank/DDBJ databases">
        <title>Complete genome sequencing of Rickettsia bellii.</title>
        <authorList>
            <person name="Madan A."/>
            <person name="Lee H."/>
            <person name="Madan A."/>
            <person name="Yoon J.-G."/>
            <person name="Ryu G.-Y."/>
            <person name="Dasch G."/>
            <person name="Ereemeva M."/>
        </authorList>
    </citation>
    <scope>NUCLEOTIDE SEQUENCE [LARGE SCALE GENOMIC DNA]</scope>
    <source>
        <strain>OSU 85-389</strain>
    </source>
</reference>
<gene>
    <name evidence="1" type="primary">rpoA</name>
    <name type="ordered locus">A1I_02160</name>
</gene>
<comment type="function">
    <text evidence="1">DNA-dependent RNA polymerase catalyzes the transcription of DNA into RNA using the four ribonucleoside triphosphates as substrates.</text>
</comment>
<comment type="catalytic activity">
    <reaction evidence="1">
        <text>RNA(n) + a ribonucleoside 5'-triphosphate = RNA(n+1) + diphosphate</text>
        <dbReference type="Rhea" id="RHEA:21248"/>
        <dbReference type="Rhea" id="RHEA-COMP:14527"/>
        <dbReference type="Rhea" id="RHEA-COMP:17342"/>
        <dbReference type="ChEBI" id="CHEBI:33019"/>
        <dbReference type="ChEBI" id="CHEBI:61557"/>
        <dbReference type="ChEBI" id="CHEBI:140395"/>
        <dbReference type="EC" id="2.7.7.6"/>
    </reaction>
</comment>
<comment type="subunit">
    <text evidence="1">Homodimer. The RNAP catalytic core consists of 2 alpha, 1 beta, 1 beta' and 1 omega subunit. When a sigma factor is associated with the core the holoenzyme is formed, which can initiate transcription.</text>
</comment>
<comment type="domain">
    <text evidence="1">The N-terminal domain is essential for RNAP assembly and basal transcription, whereas the C-terminal domain is involved in interaction with transcriptional regulators and with upstream promoter elements.</text>
</comment>
<comment type="similarity">
    <text evidence="1">Belongs to the RNA polymerase alpha chain family.</text>
</comment>
<sequence length="341" mass="38336">MLSLSKNWNALIKTDKVSYESFHETNNKSKIIVEPLERGFGLTLGNAMRRVLLSSLQGAAVTSIKIPGIEHEFSSIPGVKEDISEIILNVKGIEIKMHVAEKRVIRLKATGPGAITAGMIEAGHDVEILNPDHVICNLAKNKQFEMELTCKVGKGYTLSTNNNEDNNLPIGEIAIDALFNPVKSVTYKVENTRIGQVTDYDKLIMFVETNGDILPEMAVGLAARILQEQLQLFISFEEQEEDKQVKTDALPFSPYLLKRVDELELSVRSANCLKNDNIIYIGDLVKRTEADMLRTPNFGRKSLNEIKEILAKFSLRFGMDVPDWPPENIHELSKRYEDSYN</sequence>
<evidence type="ECO:0000255" key="1">
    <source>
        <dbReference type="HAMAP-Rule" id="MF_00059"/>
    </source>
</evidence>
<feature type="chain" id="PRO_1000007692" description="DNA-directed RNA polymerase subunit alpha">
    <location>
        <begin position="1"/>
        <end position="341"/>
    </location>
</feature>
<feature type="region of interest" description="Alpha N-terminal domain (alpha-NTD)" evidence="1">
    <location>
        <begin position="1"/>
        <end position="237"/>
    </location>
</feature>
<feature type="region of interest" description="Alpha C-terminal domain (alpha-CTD)" evidence="1">
    <location>
        <begin position="252"/>
        <end position="341"/>
    </location>
</feature>
<protein>
    <recommendedName>
        <fullName evidence="1">DNA-directed RNA polymerase subunit alpha</fullName>
        <shortName evidence="1">RNAP subunit alpha</shortName>
        <ecNumber evidence="1">2.7.7.6</ecNumber>
    </recommendedName>
    <alternativeName>
        <fullName evidence="1">RNA polymerase subunit alpha</fullName>
    </alternativeName>
    <alternativeName>
        <fullName evidence="1">Transcriptase subunit alpha</fullName>
    </alternativeName>
</protein>